<accession>B9DV30</accession>
<gene>
    <name type="ordered locus">SUB1373</name>
</gene>
<dbReference type="EC" id="3.6.1.15" evidence="1"/>
<dbReference type="EC" id="3.6.1.6" evidence="1"/>
<dbReference type="EMBL" id="AM946015">
    <property type="protein sequence ID" value="CAR42971.1"/>
    <property type="molecule type" value="Genomic_DNA"/>
</dbReference>
<dbReference type="RefSeq" id="WP_015911693.1">
    <property type="nucleotide sequence ID" value="NC_012004.1"/>
</dbReference>
<dbReference type="SMR" id="B9DV30"/>
<dbReference type="STRING" id="218495.SUB1373"/>
<dbReference type="KEGG" id="sub:SUB1373"/>
<dbReference type="eggNOG" id="COG3557">
    <property type="taxonomic scope" value="Bacteria"/>
</dbReference>
<dbReference type="HOGENOM" id="CLU_109787_1_0_9"/>
<dbReference type="OrthoDB" id="1645325at2"/>
<dbReference type="Proteomes" id="UP000000449">
    <property type="component" value="Chromosome"/>
</dbReference>
<dbReference type="GO" id="GO:0000287">
    <property type="term" value="F:magnesium ion binding"/>
    <property type="evidence" value="ECO:0007669"/>
    <property type="project" value="UniProtKB-UniRule"/>
</dbReference>
<dbReference type="GO" id="GO:0017110">
    <property type="term" value="F:nucleoside diphosphate phosphatase activity"/>
    <property type="evidence" value="ECO:0007669"/>
    <property type="project" value="UniProtKB-UniRule"/>
</dbReference>
<dbReference type="GO" id="GO:0017111">
    <property type="term" value="F:ribonucleoside triphosphate phosphatase activity"/>
    <property type="evidence" value="ECO:0007669"/>
    <property type="project" value="UniProtKB-UniRule"/>
</dbReference>
<dbReference type="Gene3D" id="2.40.380.10">
    <property type="entry name" value="FomD-like"/>
    <property type="match status" value="1"/>
</dbReference>
<dbReference type="HAMAP" id="MF_01568">
    <property type="entry name" value="Ntdp"/>
    <property type="match status" value="1"/>
</dbReference>
<dbReference type="InterPro" id="IPR007295">
    <property type="entry name" value="DUF402"/>
</dbReference>
<dbReference type="InterPro" id="IPR035930">
    <property type="entry name" value="FomD-like_sf"/>
</dbReference>
<dbReference type="InterPro" id="IPR050212">
    <property type="entry name" value="Ntdp-like"/>
</dbReference>
<dbReference type="InterPro" id="IPR016882">
    <property type="entry name" value="SA1684"/>
</dbReference>
<dbReference type="NCBIfam" id="NF010183">
    <property type="entry name" value="PRK13662.1"/>
    <property type="match status" value="1"/>
</dbReference>
<dbReference type="PANTHER" id="PTHR39159">
    <property type="match status" value="1"/>
</dbReference>
<dbReference type="PANTHER" id="PTHR39159:SF1">
    <property type="entry name" value="UPF0374 PROTEIN YGAC"/>
    <property type="match status" value="1"/>
</dbReference>
<dbReference type="Pfam" id="PF04167">
    <property type="entry name" value="DUF402"/>
    <property type="match status" value="1"/>
</dbReference>
<dbReference type="PIRSF" id="PIRSF028345">
    <property type="entry name" value="UCP028345"/>
    <property type="match status" value="1"/>
</dbReference>
<dbReference type="SUPFAM" id="SSF159234">
    <property type="entry name" value="FomD-like"/>
    <property type="match status" value="1"/>
</dbReference>
<proteinExistence type="inferred from homology"/>
<feature type="chain" id="PRO_1000185477" description="Nucleoside triphosphate/diphosphate phosphatase">
    <location>
        <begin position="1"/>
        <end position="177"/>
    </location>
</feature>
<feature type="active site" description="Proton donor" evidence="1">
    <location>
        <position position="23"/>
    </location>
</feature>
<feature type="binding site" evidence="1">
    <location>
        <position position="87"/>
    </location>
    <ligand>
        <name>Mg(2+)</name>
        <dbReference type="ChEBI" id="CHEBI:18420"/>
        <label>1</label>
    </ligand>
</feature>
<feature type="binding site" evidence="1">
    <location>
        <position position="103"/>
    </location>
    <ligand>
        <name>Mg(2+)</name>
        <dbReference type="ChEBI" id="CHEBI:18420"/>
        <label>1</label>
    </ligand>
</feature>
<feature type="binding site" evidence="1">
    <location>
        <position position="105"/>
    </location>
    <ligand>
        <name>Mg(2+)</name>
        <dbReference type="ChEBI" id="CHEBI:18420"/>
        <label>2</label>
    </ligand>
</feature>
<feature type="binding site" evidence="1">
    <location>
        <position position="107"/>
    </location>
    <ligand>
        <name>Mg(2+)</name>
        <dbReference type="ChEBI" id="CHEBI:18420"/>
        <label>1</label>
    </ligand>
</feature>
<feature type="binding site" evidence="1">
    <location>
        <position position="107"/>
    </location>
    <ligand>
        <name>Mg(2+)</name>
        <dbReference type="ChEBI" id="CHEBI:18420"/>
        <label>2</label>
    </ligand>
</feature>
<feature type="binding site" evidence="1">
    <location>
        <position position="120"/>
    </location>
    <ligand>
        <name>Mg(2+)</name>
        <dbReference type="ChEBI" id="CHEBI:18420"/>
        <label>2</label>
    </ligand>
</feature>
<feature type="binding site" evidence="1">
    <location>
        <position position="123"/>
    </location>
    <ligand>
        <name>Mg(2+)</name>
        <dbReference type="ChEBI" id="CHEBI:18420"/>
        <label>2</label>
    </ligand>
</feature>
<reference key="1">
    <citation type="journal article" date="2009" name="BMC Genomics">
        <title>Evidence for niche adaptation in the genome of the bovine pathogen Streptococcus uberis.</title>
        <authorList>
            <person name="Ward P.N."/>
            <person name="Holden M.T.G."/>
            <person name="Leigh J.A."/>
            <person name="Lennard N."/>
            <person name="Bignell A."/>
            <person name="Barron A."/>
            <person name="Clark L."/>
            <person name="Quail M.A."/>
            <person name="Woodward J."/>
            <person name="Barrell B.G."/>
            <person name="Egan S.A."/>
            <person name="Field T.R."/>
            <person name="Maskell D."/>
            <person name="Kehoe M."/>
            <person name="Dowson C.G."/>
            <person name="Chanter N."/>
            <person name="Whatmore A.M."/>
            <person name="Bentley S.D."/>
            <person name="Parkhill J."/>
        </authorList>
    </citation>
    <scope>NUCLEOTIDE SEQUENCE [LARGE SCALE GENOMIC DNA]</scope>
    <source>
        <strain>ATCC BAA-854 / 0140J</strain>
    </source>
</reference>
<sequence length="177" mass="21077">MKLPKEGDFITIQSYKHDGSLHRTWRDTMVLKTTENALIGVNDHTLVTENDGRRWVTREPAIVYFHKKYWFNIIAMIRDNGVSYYCNLASPYVLDGEALKYIDYDLDVKVFSDGEKRLLDVDEYEVHKVKMAYPSDIDYILKENVKVLVDWIKHKKGPFSEAYIKIWYKRYLELKNR</sequence>
<evidence type="ECO:0000255" key="1">
    <source>
        <dbReference type="HAMAP-Rule" id="MF_01568"/>
    </source>
</evidence>
<protein>
    <recommendedName>
        <fullName evidence="1">Nucleoside triphosphate/diphosphate phosphatase</fullName>
        <ecNumber evidence="1">3.6.1.15</ecNumber>
        <ecNumber evidence="1">3.6.1.6</ecNumber>
    </recommendedName>
</protein>
<organism>
    <name type="scientific">Streptococcus uberis (strain ATCC BAA-854 / 0140J)</name>
    <dbReference type="NCBI Taxonomy" id="218495"/>
    <lineage>
        <taxon>Bacteria</taxon>
        <taxon>Bacillati</taxon>
        <taxon>Bacillota</taxon>
        <taxon>Bacilli</taxon>
        <taxon>Lactobacillales</taxon>
        <taxon>Streptococcaceae</taxon>
        <taxon>Streptococcus</taxon>
    </lineage>
</organism>
<comment type="function">
    <text evidence="1">Has nucleoside phosphatase activity towards nucleoside triphosphates and nucleoside diphosphates.</text>
</comment>
<comment type="catalytic activity">
    <reaction evidence="1">
        <text>a ribonucleoside 5'-triphosphate + H2O = a ribonucleoside 5'-diphosphate + phosphate + H(+)</text>
        <dbReference type="Rhea" id="RHEA:23680"/>
        <dbReference type="ChEBI" id="CHEBI:15377"/>
        <dbReference type="ChEBI" id="CHEBI:15378"/>
        <dbReference type="ChEBI" id="CHEBI:43474"/>
        <dbReference type="ChEBI" id="CHEBI:57930"/>
        <dbReference type="ChEBI" id="CHEBI:61557"/>
        <dbReference type="EC" id="3.6.1.15"/>
    </reaction>
</comment>
<comment type="catalytic activity">
    <reaction evidence="1">
        <text>a ribonucleoside 5'-diphosphate + H2O = a ribonucleoside 5'-phosphate + phosphate + H(+)</text>
        <dbReference type="Rhea" id="RHEA:36799"/>
        <dbReference type="ChEBI" id="CHEBI:15377"/>
        <dbReference type="ChEBI" id="CHEBI:15378"/>
        <dbReference type="ChEBI" id="CHEBI:43474"/>
        <dbReference type="ChEBI" id="CHEBI:57930"/>
        <dbReference type="ChEBI" id="CHEBI:58043"/>
        <dbReference type="EC" id="3.6.1.6"/>
    </reaction>
</comment>
<comment type="cofactor">
    <cofactor evidence="1">
        <name>Mg(2+)</name>
        <dbReference type="ChEBI" id="CHEBI:18420"/>
    </cofactor>
</comment>
<comment type="similarity">
    <text evidence="1">Belongs to the Ntdp family.</text>
</comment>
<name>NTDP_STRU0</name>
<keyword id="KW-0378">Hydrolase</keyword>
<keyword id="KW-0460">Magnesium</keyword>
<keyword id="KW-0479">Metal-binding</keyword>
<keyword id="KW-1185">Reference proteome</keyword>